<organism>
    <name type="scientific">Muntiacus reevesi</name>
    <name type="common">Reeves' muntjac</name>
    <name type="synonym">Cervus reevesi</name>
    <dbReference type="NCBI Taxonomy" id="9886"/>
    <lineage>
        <taxon>Eukaryota</taxon>
        <taxon>Metazoa</taxon>
        <taxon>Chordata</taxon>
        <taxon>Craniata</taxon>
        <taxon>Vertebrata</taxon>
        <taxon>Euteleostomi</taxon>
        <taxon>Mammalia</taxon>
        <taxon>Eutheria</taxon>
        <taxon>Laurasiatheria</taxon>
        <taxon>Artiodactyla</taxon>
        <taxon>Ruminantia</taxon>
        <taxon>Pecora</taxon>
        <taxon>Cervidae</taxon>
        <taxon>Muntiacinae</taxon>
        <taxon>Muntiacus</taxon>
    </lineage>
</organism>
<evidence type="ECO:0000250" key="1"/>
<evidence type="ECO:0000250" key="2">
    <source>
        <dbReference type="UniProtKB" id="Q75UQ2"/>
    </source>
</evidence>
<evidence type="ECO:0000250" key="3">
    <source>
        <dbReference type="UniProtKB" id="Q9UEE9"/>
    </source>
</evidence>
<evidence type="ECO:0000255" key="4">
    <source>
        <dbReference type="PROSITE-ProRule" id="PRU00610"/>
    </source>
</evidence>
<evidence type="ECO:0000256" key="5">
    <source>
        <dbReference type="SAM" id="MobiDB-lite"/>
    </source>
</evidence>
<sequence length="298" mass="33340">MEEFDSEDFSTSEEDEDYVPSGGEYSEDDINELVKEDEVDGEEETQKTKGTKRKAESVLARKRKQGGLSLEEEGEEDANEESGGSSSEEEDAATGQEKGIESEDARKKKEDELWASFLNDVGPKSKVPPSTHVKTGEETEETSSSHLVKAEKLEKPQETEKVKITKVFDFAGEEVRVIKEVDATSKEAKSFFKQNEKEKPQSNISSSVPSLSAGSGLKRSSGMSSLLGKIGAKKQKMSTLEKSKLDWESFKEEEGIGEELAIHNRGKEGYIERKAFLDRVDHRQFEIERDLRLSQMKP</sequence>
<protein>
    <recommendedName>
        <fullName>Craniofacial development protein 1</fullName>
    </recommendedName>
    <alternativeName>
        <fullName>Bucentaur</fullName>
    </alternativeName>
</protein>
<gene>
    <name type="primary">CFDP1</name>
    <name type="synonym">BCNT</name>
</gene>
<feature type="chain" id="PRO_0000212496" description="Craniofacial development protein 1">
    <location>
        <begin position="1"/>
        <end position="298"/>
    </location>
</feature>
<feature type="domain" description="BCNT-C" evidence="4">
    <location>
        <begin position="217"/>
        <end position="298"/>
    </location>
</feature>
<feature type="region of interest" description="Disordered" evidence="5">
    <location>
        <begin position="1"/>
        <end position="158"/>
    </location>
</feature>
<feature type="region of interest" description="Hydrophilic">
    <location>
        <begin position="177"/>
        <end position="216"/>
    </location>
</feature>
<feature type="region of interest" description="Disordered" evidence="5">
    <location>
        <begin position="191"/>
        <end position="223"/>
    </location>
</feature>
<feature type="compositionally biased region" description="Acidic residues" evidence="5">
    <location>
        <begin position="1"/>
        <end position="18"/>
    </location>
</feature>
<feature type="compositionally biased region" description="Acidic residues" evidence="5">
    <location>
        <begin position="25"/>
        <end position="43"/>
    </location>
</feature>
<feature type="compositionally biased region" description="Acidic residues" evidence="5">
    <location>
        <begin position="70"/>
        <end position="80"/>
    </location>
</feature>
<feature type="compositionally biased region" description="Basic and acidic residues" evidence="5">
    <location>
        <begin position="98"/>
        <end position="112"/>
    </location>
</feature>
<feature type="compositionally biased region" description="Basic and acidic residues" evidence="5">
    <location>
        <begin position="148"/>
        <end position="158"/>
    </location>
</feature>
<feature type="compositionally biased region" description="Basic and acidic residues" evidence="5">
    <location>
        <begin position="191"/>
        <end position="200"/>
    </location>
</feature>
<feature type="compositionally biased region" description="Low complexity" evidence="5">
    <location>
        <begin position="205"/>
        <end position="217"/>
    </location>
</feature>
<feature type="modified residue" description="Phosphoserine" evidence="2">
    <location>
        <position position="82"/>
    </location>
</feature>
<feature type="modified residue" description="Phosphoserine" evidence="2">
    <location>
        <position position="85"/>
    </location>
</feature>
<feature type="modified residue" description="Phosphoserine" evidence="2">
    <location>
        <position position="86"/>
    </location>
</feature>
<feature type="modified residue" description="Phosphoserine" evidence="3">
    <location>
        <position position="116"/>
    </location>
</feature>
<feature type="modified residue" description="Phosphoserine" evidence="3">
    <location>
        <position position="215"/>
    </location>
</feature>
<feature type="modified residue" description="N6-methyllysine" evidence="3">
    <location>
        <position position="218"/>
    </location>
</feature>
<feature type="modified residue" description="Phosphoserine" evidence="3">
    <location>
        <position position="249"/>
    </location>
</feature>
<feature type="cross-link" description="Glycyl lysine isopeptide (Lys-Gly) (interchain with G-Cter in SUMO2)" evidence="3">
    <location>
        <position position="149"/>
    </location>
</feature>
<dbReference type="EMBL" id="AB213485">
    <property type="protein sequence ID" value="BAE19807.1"/>
    <property type="molecule type" value="mRNA"/>
</dbReference>
<dbReference type="SMR" id="Q4ADK4"/>
<dbReference type="GO" id="GO:0000776">
    <property type="term" value="C:kinetochore"/>
    <property type="evidence" value="ECO:0007669"/>
    <property type="project" value="UniProtKB-KW"/>
</dbReference>
<dbReference type="GO" id="GO:0000812">
    <property type="term" value="C:Swr1 complex"/>
    <property type="evidence" value="ECO:0007669"/>
    <property type="project" value="TreeGrafter"/>
</dbReference>
<dbReference type="InterPro" id="IPR011421">
    <property type="entry name" value="BCNT-C"/>
</dbReference>
<dbReference type="InterPro" id="IPR027124">
    <property type="entry name" value="Swc5/CFDP1/2"/>
</dbReference>
<dbReference type="PANTHER" id="PTHR48407">
    <property type="entry name" value="CRANIOFACIAL DEVELOPMENT PROTEIN 1"/>
    <property type="match status" value="1"/>
</dbReference>
<dbReference type="PANTHER" id="PTHR48407:SF1">
    <property type="entry name" value="CRANIOFACIAL DEVELOPMENT PROTEIN 1"/>
    <property type="match status" value="1"/>
</dbReference>
<dbReference type="Pfam" id="PF07572">
    <property type="entry name" value="BCNT"/>
    <property type="match status" value="1"/>
</dbReference>
<dbReference type="PROSITE" id="PS51279">
    <property type="entry name" value="BCNT_C"/>
    <property type="match status" value="1"/>
</dbReference>
<accession>Q4ADK4</accession>
<name>CFDP1_MUNRE</name>
<reference key="1">
    <citation type="submission" date="2005-05" db="EMBL/GenBank/DDBJ databases">
        <title>Gene organization of bcnt and p97bcnt genes.</title>
        <authorList>
            <person name="Iwashita S."/>
            <person name="Kimura J."/>
            <person name="Fukuta K."/>
        </authorList>
    </citation>
    <scope>NUCLEOTIDE SEQUENCE [MRNA]</scope>
    <source>
        <tissue>Muscle</tissue>
    </source>
</reference>
<proteinExistence type="evidence at transcript level"/>
<keyword id="KW-0137">Centromere</keyword>
<keyword id="KW-0158">Chromosome</keyword>
<keyword id="KW-0217">Developmental protein</keyword>
<keyword id="KW-1017">Isopeptide bond</keyword>
<keyword id="KW-0995">Kinetochore</keyword>
<keyword id="KW-0488">Methylation</keyword>
<keyword id="KW-0597">Phosphoprotein</keyword>
<keyword id="KW-0832">Ubl conjugation</keyword>
<comment type="function">
    <text evidence="1">May play a role during embryogenesis.</text>
</comment>
<comment type="subcellular location">
    <subcellularLocation>
        <location evidence="3">Chromosome</location>
        <location evidence="3">Centromere</location>
        <location evidence="3">Kinetochore</location>
    </subcellularLocation>
</comment>